<proteinExistence type="inferred from homology"/>
<feature type="chain" id="PRO_0000444752" description="Spermatogenesis-associated protein 31F1D">
    <location>
        <begin position="1"/>
        <end position="1308"/>
    </location>
</feature>
<feature type="transmembrane region" description="Helical" evidence="1">
    <location>
        <begin position="7"/>
        <end position="27"/>
    </location>
</feature>
<feature type="region of interest" description="Disordered" evidence="2">
    <location>
        <begin position="464"/>
        <end position="488"/>
    </location>
</feature>
<feature type="region of interest" description="Disordered" evidence="2">
    <location>
        <begin position="627"/>
        <end position="648"/>
    </location>
</feature>
<feature type="region of interest" description="Disordered" evidence="2">
    <location>
        <begin position="844"/>
        <end position="863"/>
    </location>
</feature>
<feature type="region of interest" description="Disordered" evidence="2">
    <location>
        <begin position="902"/>
        <end position="927"/>
    </location>
</feature>
<feature type="region of interest" description="Disordered" evidence="2">
    <location>
        <begin position="1005"/>
        <end position="1026"/>
    </location>
</feature>
<feature type="region of interest" description="Disordered" evidence="2">
    <location>
        <begin position="1084"/>
        <end position="1190"/>
    </location>
</feature>
<feature type="region of interest" description="Disordered" evidence="2">
    <location>
        <begin position="1204"/>
        <end position="1254"/>
    </location>
</feature>
<feature type="compositionally biased region" description="Pro residues" evidence="2">
    <location>
        <begin position="465"/>
        <end position="478"/>
    </location>
</feature>
<feature type="compositionally biased region" description="Acidic residues" evidence="2">
    <location>
        <begin position="1107"/>
        <end position="1117"/>
    </location>
</feature>
<comment type="subcellular location">
    <subcellularLocation>
        <location evidence="1">Membrane</location>
        <topology evidence="1">Single-pass membrane protein</topology>
    </subcellularLocation>
</comment>
<comment type="similarity">
    <text evidence="3">Belongs to the SPATA31 family.</text>
</comment>
<keyword id="KW-0472">Membrane</keyword>
<keyword id="KW-1185">Reference proteome</keyword>
<keyword id="KW-0812">Transmembrane</keyword>
<keyword id="KW-1133">Transmembrane helix</keyword>
<organism>
    <name type="scientific">Mus musculus</name>
    <name type="common">Mouse</name>
    <dbReference type="NCBI Taxonomy" id="10090"/>
    <lineage>
        <taxon>Eukaryota</taxon>
        <taxon>Metazoa</taxon>
        <taxon>Chordata</taxon>
        <taxon>Craniata</taxon>
        <taxon>Vertebrata</taxon>
        <taxon>Euteleostomi</taxon>
        <taxon>Mammalia</taxon>
        <taxon>Eutheria</taxon>
        <taxon>Euarchontoglires</taxon>
        <taxon>Glires</taxon>
        <taxon>Rodentia</taxon>
        <taxon>Myomorpha</taxon>
        <taxon>Muroidea</taxon>
        <taxon>Muridae</taxon>
        <taxon>Murinae</taxon>
        <taxon>Mus</taxon>
        <taxon>Mus</taxon>
    </lineage>
</organism>
<accession>C0HKD3</accession>
<accession>A2APU8</accession>
<dbReference type="EMBL" id="CT868690">
    <property type="status" value="NOT_ANNOTATED_CDS"/>
    <property type="molecule type" value="Genomic_DNA"/>
</dbReference>
<dbReference type="RefSeq" id="XP_001481289.2">
    <property type="nucleotide sequence ID" value="XM_001481239.6"/>
</dbReference>
<dbReference type="RefSeq" id="XP_003689294.1">
    <property type="nucleotide sequence ID" value="XM_003689246.4"/>
</dbReference>
<dbReference type="Ensembl" id="ENSMUST00000108026.3">
    <property type="protein sequence ID" value="ENSMUSP00000103661.3"/>
    <property type="gene ID" value="ENSMUSG00000078746.3"/>
</dbReference>
<dbReference type="Ensembl" id="ENSMUST00000178192.3">
    <property type="protein sequence ID" value="ENSMUSP00000137159.2"/>
    <property type="gene ID" value="ENSMUSG00000093996.3"/>
</dbReference>
<dbReference type="Ensembl" id="ENSMUST00000180201.2">
    <property type="protein sequence ID" value="ENSMUSP00000136864.2"/>
    <property type="gene ID" value="ENSMUSG00000094066.2"/>
</dbReference>
<dbReference type="GeneID" id="100043920"/>
<dbReference type="KEGG" id="mmu:545611"/>
<dbReference type="AGR" id="MGI:5434294"/>
<dbReference type="CTD" id="100043920"/>
<dbReference type="CTD" id="100862261"/>
<dbReference type="CTD" id="545611"/>
<dbReference type="MGI" id="MGI:5434294">
    <property type="gene designation" value="Spata31f1d"/>
</dbReference>
<dbReference type="VEuPathDB" id="HostDB:ENSMUSG00000078746"/>
<dbReference type="VEuPathDB" id="HostDB:ENSMUSG00000079774"/>
<dbReference type="VEuPathDB" id="HostDB:ENSMUSG00000093996"/>
<dbReference type="VEuPathDB" id="HostDB:ENSMUSG00000094066"/>
<dbReference type="GeneTree" id="ENSGT00950000183043"/>
<dbReference type="InParanoid" id="C0HKD3"/>
<dbReference type="OMA" id="CRCHQKV"/>
<dbReference type="OrthoDB" id="73989at9989"/>
<dbReference type="ChiTaRS" id="Fam205a4">
    <property type="organism name" value="mouse"/>
</dbReference>
<dbReference type="PRO" id="PR:C0HKD3"/>
<dbReference type="Proteomes" id="UP000000589">
    <property type="component" value="Chromosome 4"/>
</dbReference>
<dbReference type="Bgee" id="ENSMUSG00000078746">
    <property type="expression patterns" value="Expressed in spermatid and 14 other cell types or tissues"/>
</dbReference>
<dbReference type="GO" id="GO:0016020">
    <property type="term" value="C:membrane"/>
    <property type="evidence" value="ECO:0007669"/>
    <property type="project" value="UniProtKB-SubCell"/>
</dbReference>
<dbReference type="InterPro" id="IPR039509">
    <property type="entry name" value="SPATA31"/>
</dbReference>
<dbReference type="InterPro" id="IPR027970">
    <property type="entry name" value="SPATA31F3-like"/>
</dbReference>
<dbReference type="PANTHER" id="PTHR21859">
    <property type="entry name" value="ACROSOME-SPECIFIC PROTEIN"/>
    <property type="match status" value="1"/>
</dbReference>
<dbReference type="PANTHER" id="PTHR21859:SF62">
    <property type="entry name" value="FAMILY WITH SEQUENCE SIMILARITY 205, MEMBER A1-RELATED"/>
    <property type="match status" value="1"/>
</dbReference>
<dbReference type="Pfam" id="PF15371">
    <property type="entry name" value="DUF4599"/>
    <property type="match status" value="1"/>
</dbReference>
<dbReference type="Pfam" id="PF14650">
    <property type="entry name" value="FAM75"/>
    <property type="match status" value="2"/>
</dbReference>
<protein>
    <recommendedName>
        <fullName evidence="3">Spermatogenesis-associated protein 31F1D</fullName>
    </recommendedName>
    <alternativeName>
        <fullName evidence="4">Protein FAM205A-4</fullName>
    </alternativeName>
    <alternativeName>
        <fullName evidence="3">Protein SPATA31F1-4</fullName>
    </alternativeName>
</protein>
<sequence length="1308" mass="146156">MLSTMCFLWDTECPLYVYFCFFIIVLIVWQVRQNYQGLKCENRRSCCRRHQKVRQRAKDAASRARRLSREEDEKPCELLSIMKSQSWVPKQGNVRQLLCLDPSCQICEATTLEIRQLLQSKKSQISPALLGLPQRAACLEMPISSESFEWNQDFYSRYSTNSPVVPGNQTLTQLTEELTESTNADGVLLCWTDPLQIGQEFHLADMPMASETLVSPGLEEPVVLMNEEDTVHSNLNYIQQLQDHEALNSQIPFQTLTPQLTVTHPMAVSIVTDAPQPFLSPEVLRLLEIHVKKLMHFQRWGLPRRVEESLKQFMPNPPVYLPPEHNQPVSFILNTSSQDCVHRFEGISPETWYSYMDGQPIQTFWVSEWSSGDQGQRLSCKPIPSPVEKPLLTPDYELLHDLCLSPEGQVDGSQSNLQKKFTQLFCGLPSMHSESLGSTFLCTQGVSKNTLKPPYKEPHFLKVSPPIPLPEAAPPPSSTSPNESLDEPQRAQIGGVPFLTLSECKTLEWHLLQRQLQLQWGLPAVIARPPRVQSHTQYKHKPWNKAKPRETLKFFGPGKPFSALTRELFFIPQHARRLLEFHLQKRLIHLRWGLPQRIQRSINMLLSSTDLQSLPCGGSRLPNVSISQPGKPEAYGSGDTFLPTAGKGTTPMPHLFAKAQEMLKSHDTKCEQIREGKVPACVQSAWKGRIPGDLAAGTLFPNIPQGQPLELQAENNPDLHQEAVSWKPMDLDQEAQAFSGVFIEHCRRPQALSEETIKKLETTLRHKYLAFLSGLQALYCMAPTKATSPTVDQSVITTMPWSVKSPQKPLSQKSPLEALCLSGLEPCTQDDKETSANIAEEFQHGAQGHGRTEKVPPERQPLLNRPYSLDTEIMERVSFYLKRKALDIKLGISLKESVFQEPTATDLESESVQEPLGSPRESTLLQGPPTLCHVPVAPDPDKVCLKQPATAVQVVFQEQNQPSSRAVPHRSARQGSQVHRNMMEAQVHYVQMGTGGEMLNLGEPFSTESQSPGKSKSGYVPTVAGKRKIPGKPKVVGDLGEGDAGLGFSLVSLKTRQDGEQEKRLLHRQLQGSSLQAQTFHLEGACPHSPQESPELQFADPPPEVFMETDSEQDMEDSQSKESIVPEPARTAKAPQPMLSRASQGLPFPRSPTQRKPSQGQPGPGHVPPGHATPASPYTRPSRLPEAGLKNKMKLFFHSIKLKMKSKAHTEPSTVSTPGKVAKTSKENIDRGLPQAKSPTKKTKPEDFRGPKAQFSVVGPCLTPSYILDSKFWPRPRRVGSVSVLGHSYHCPRHCPRLAYANQQRNPP</sequence>
<name>31F14_MOUSE</name>
<gene>
    <name evidence="4" type="primary">Spata31f1d</name>
    <name evidence="4" type="synonym">Fam205a4</name>
    <name evidence="3" type="synonym">Spata31f1-4</name>
</gene>
<evidence type="ECO:0000255" key="1"/>
<evidence type="ECO:0000256" key="2">
    <source>
        <dbReference type="SAM" id="MobiDB-lite"/>
    </source>
</evidence>
<evidence type="ECO:0000305" key="3"/>
<evidence type="ECO:0000312" key="4">
    <source>
        <dbReference type="MGI" id="MGI:5434294"/>
    </source>
</evidence>
<reference key="1">
    <citation type="journal article" date="2009" name="PLoS Biol.">
        <title>Lineage-specific biology revealed by a finished genome assembly of the mouse.</title>
        <authorList>
            <person name="Church D.M."/>
            <person name="Goodstadt L."/>
            <person name="Hillier L.W."/>
            <person name="Zody M.C."/>
            <person name="Goldstein S."/>
            <person name="She X."/>
            <person name="Bult C.J."/>
            <person name="Agarwala R."/>
            <person name="Cherry J.L."/>
            <person name="DiCuccio M."/>
            <person name="Hlavina W."/>
            <person name="Kapustin Y."/>
            <person name="Meric P."/>
            <person name="Maglott D."/>
            <person name="Birtle Z."/>
            <person name="Marques A.C."/>
            <person name="Graves T."/>
            <person name="Zhou S."/>
            <person name="Teague B."/>
            <person name="Potamousis K."/>
            <person name="Churas C."/>
            <person name="Place M."/>
            <person name="Herschleb J."/>
            <person name="Runnheim R."/>
            <person name="Forrest D."/>
            <person name="Amos-Landgraf J."/>
            <person name="Schwartz D.C."/>
            <person name="Cheng Z."/>
            <person name="Lindblad-Toh K."/>
            <person name="Eichler E.E."/>
            <person name="Ponting C.P."/>
        </authorList>
    </citation>
    <scope>NUCLEOTIDE SEQUENCE [LARGE SCALE GENOMIC DNA]</scope>
    <source>
        <strain>C57BL/6J</strain>
    </source>
</reference>